<dbReference type="EMBL" id="CU329670">
    <property type="protein sequence ID" value="CAA90473.2"/>
    <property type="molecule type" value="Genomic_DNA"/>
</dbReference>
<dbReference type="PIR" id="T38613">
    <property type="entry name" value="S59648"/>
</dbReference>
<dbReference type="RefSeq" id="NP_592927.2">
    <property type="nucleotide sequence ID" value="NM_001018328.2"/>
</dbReference>
<dbReference type="SMR" id="Q09732"/>
<dbReference type="BioGRID" id="279511">
    <property type="interactions" value="68"/>
</dbReference>
<dbReference type="FunCoup" id="Q09732">
    <property type="interactions" value="319"/>
</dbReference>
<dbReference type="STRING" id="284812.Q09732"/>
<dbReference type="iPTMnet" id="Q09732"/>
<dbReference type="PaxDb" id="4896-SPAC31A2.15c.1"/>
<dbReference type="EnsemblFungi" id="SPAC31A2.15c.1">
    <property type="protein sequence ID" value="SPAC31A2.15c.1:pep"/>
    <property type="gene ID" value="SPAC31A2.15c"/>
</dbReference>
<dbReference type="GeneID" id="2543078"/>
<dbReference type="KEGG" id="spo:2543078"/>
<dbReference type="PomBase" id="SPAC31A2.15c">
    <property type="gene designation" value="dcc1"/>
</dbReference>
<dbReference type="VEuPathDB" id="FungiDB:SPAC31A2.15c"/>
<dbReference type="eggNOG" id="KOG0798">
    <property type="taxonomic scope" value="Eukaryota"/>
</dbReference>
<dbReference type="HOGENOM" id="CLU_034504_0_0_1"/>
<dbReference type="InParanoid" id="Q09732"/>
<dbReference type="OMA" id="EDKISYW"/>
<dbReference type="PRO" id="PR:Q09732"/>
<dbReference type="Proteomes" id="UP000002485">
    <property type="component" value="Chromosome I"/>
</dbReference>
<dbReference type="GO" id="GO:0000785">
    <property type="term" value="C:chromatin"/>
    <property type="evidence" value="ECO:0000318"/>
    <property type="project" value="GO_Central"/>
</dbReference>
<dbReference type="GO" id="GO:0000775">
    <property type="term" value="C:chromosome, centromeric region"/>
    <property type="evidence" value="ECO:0000318"/>
    <property type="project" value="GO_Central"/>
</dbReference>
<dbReference type="GO" id="GO:0031390">
    <property type="term" value="C:Ctf18 RFC-like complex"/>
    <property type="evidence" value="ECO:0000318"/>
    <property type="project" value="GO_Central"/>
</dbReference>
<dbReference type="GO" id="GO:0005829">
    <property type="term" value="C:cytosol"/>
    <property type="evidence" value="ECO:0007005"/>
    <property type="project" value="PomBase"/>
</dbReference>
<dbReference type="GO" id="GO:0005634">
    <property type="term" value="C:nucleus"/>
    <property type="evidence" value="ECO:0007005"/>
    <property type="project" value="PomBase"/>
</dbReference>
<dbReference type="GO" id="GO:0016887">
    <property type="term" value="F:ATP hydrolysis activity"/>
    <property type="evidence" value="ECO:0000305"/>
    <property type="project" value="PomBase"/>
</dbReference>
<dbReference type="GO" id="GO:0003677">
    <property type="term" value="F:DNA binding"/>
    <property type="evidence" value="ECO:0007669"/>
    <property type="project" value="UniProtKB-KW"/>
</dbReference>
<dbReference type="GO" id="GO:0006260">
    <property type="term" value="P:DNA replication"/>
    <property type="evidence" value="ECO:0007669"/>
    <property type="project" value="UniProtKB-KW"/>
</dbReference>
<dbReference type="GO" id="GO:0034088">
    <property type="term" value="P:maintenance of mitotic sister chromatid cohesion"/>
    <property type="evidence" value="ECO:0000318"/>
    <property type="project" value="GO_Central"/>
</dbReference>
<dbReference type="GO" id="GO:0007064">
    <property type="term" value="P:mitotic sister chromatid cohesion"/>
    <property type="evidence" value="ECO:0000266"/>
    <property type="project" value="PomBase"/>
</dbReference>
<dbReference type="InterPro" id="IPR019128">
    <property type="entry name" value="Dcc1"/>
</dbReference>
<dbReference type="PANTHER" id="PTHR13395:SF6">
    <property type="entry name" value="SISTER CHROMATID COHESION PROTEIN DCC1"/>
    <property type="match status" value="1"/>
</dbReference>
<dbReference type="PANTHER" id="PTHR13395">
    <property type="entry name" value="SISTER CHROMATID COHESION PROTEIN DCC1-RELATED"/>
    <property type="match status" value="1"/>
</dbReference>
<dbReference type="Pfam" id="PF09724">
    <property type="entry name" value="Dcc1"/>
    <property type="match status" value="1"/>
</dbReference>
<accession>Q09732</accession>
<gene>
    <name type="primary">dcc1</name>
    <name type="ORF">SPAC31A2.15c</name>
</gene>
<protein>
    <recommendedName>
        <fullName>Sister chromatid cohesion protein dcc1</fullName>
    </recommendedName>
    <alternativeName>
        <fullName>Defective in sister chromatid cohesion protein 1</fullName>
    </alternativeName>
</protein>
<sequence>MEANEERCILLKYPHPSSDISSEYLLLELDDDLLKTLEENPEEEIVFKSDFDKKASVLCTSDKTYAVRQVVQSNSYLLFDELSPTDWVLNDTCYSFLEVERIYGFIFSDDKISYWDEDSVELKPISLTKDQFIRSVPASRNEVDSFLQKNFFMVKNEFLYRLSPSYICSIIDWIFVIAQQLHIDFASFEFKILKKPAMDDEFDWDSVICVLESISSPIKDNVLPKKFNIDLELTTFWYGRFLLEGINSISSDEFIQLWDNRLPYPCKGLPSLNLLKGYYFHDTPNTIQYLSGDQLPREPSRRFQSLFQLKSKWLYEELWSFVKDLALSKSRVEALILKYGRKQTSRDGVYINSRGTW</sequence>
<comment type="function">
    <text evidence="1">Essential for the fidelity of chromosome transmission. Required for the DNA replication block checkpoint. Replication factor C (RFC) complex has an essential but redundant activity in sister chromatid cohesion establishment. An RFC-like complex (ctf18-RFC) is formed where ctf18 replaces rfc1 in the RFC complex along with the association of dcc1 and ctf8. This complex is required for efficient establishment of chromosome cohesion during S-phase. Acts as a PCNA loader, loading PCNA onto primed templates.</text>
</comment>
<comment type="subunit">
    <text evidence="3">Component of the ctf18-RFC complex which consists of ctf18, ctf8, dcc1, rfc2, rfc3, rfc4 and rfc5.</text>
</comment>
<comment type="subcellular location">
    <subcellularLocation>
        <location evidence="2">Cytoplasm</location>
    </subcellularLocation>
    <subcellularLocation>
        <location evidence="2">Nucleus</location>
    </subcellularLocation>
</comment>
<comment type="similarity">
    <text evidence="3">Belongs to the DCC1 family.</text>
</comment>
<proteinExistence type="inferred from homology"/>
<keyword id="KW-0131">Cell cycle</keyword>
<keyword id="KW-0963">Cytoplasm</keyword>
<keyword id="KW-0235">DNA replication</keyword>
<keyword id="KW-0238">DNA-binding</keyword>
<keyword id="KW-0539">Nucleus</keyword>
<keyword id="KW-1185">Reference proteome</keyword>
<name>DCC1_SCHPO</name>
<organism>
    <name type="scientific">Schizosaccharomyces pombe (strain 972 / ATCC 24843)</name>
    <name type="common">Fission yeast</name>
    <dbReference type="NCBI Taxonomy" id="284812"/>
    <lineage>
        <taxon>Eukaryota</taxon>
        <taxon>Fungi</taxon>
        <taxon>Dikarya</taxon>
        <taxon>Ascomycota</taxon>
        <taxon>Taphrinomycotina</taxon>
        <taxon>Schizosaccharomycetes</taxon>
        <taxon>Schizosaccharomycetales</taxon>
        <taxon>Schizosaccharomycetaceae</taxon>
        <taxon>Schizosaccharomyces</taxon>
    </lineage>
</organism>
<reference key="1">
    <citation type="journal article" date="2002" name="Nature">
        <title>The genome sequence of Schizosaccharomyces pombe.</title>
        <authorList>
            <person name="Wood V."/>
            <person name="Gwilliam R."/>
            <person name="Rajandream M.A."/>
            <person name="Lyne M.H."/>
            <person name="Lyne R."/>
            <person name="Stewart A."/>
            <person name="Sgouros J.G."/>
            <person name="Peat N."/>
            <person name="Hayles J."/>
            <person name="Baker S.G."/>
            <person name="Basham D."/>
            <person name="Bowman S."/>
            <person name="Brooks K."/>
            <person name="Brown D."/>
            <person name="Brown S."/>
            <person name="Chillingworth T."/>
            <person name="Churcher C.M."/>
            <person name="Collins M."/>
            <person name="Connor R."/>
            <person name="Cronin A."/>
            <person name="Davis P."/>
            <person name="Feltwell T."/>
            <person name="Fraser A."/>
            <person name="Gentles S."/>
            <person name="Goble A."/>
            <person name="Hamlin N."/>
            <person name="Harris D.E."/>
            <person name="Hidalgo J."/>
            <person name="Hodgson G."/>
            <person name="Holroyd S."/>
            <person name="Hornsby T."/>
            <person name="Howarth S."/>
            <person name="Huckle E.J."/>
            <person name="Hunt S."/>
            <person name="Jagels K."/>
            <person name="James K.D."/>
            <person name="Jones L."/>
            <person name="Jones M."/>
            <person name="Leather S."/>
            <person name="McDonald S."/>
            <person name="McLean J."/>
            <person name="Mooney P."/>
            <person name="Moule S."/>
            <person name="Mungall K.L."/>
            <person name="Murphy L.D."/>
            <person name="Niblett D."/>
            <person name="Odell C."/>
            <person name="Oliver K."/>
            <person name="O'Neil S."/>
            <person name="Pearson D."/>
            <person name="Quail M.A."/>
            <person name="Rabbinowitsch E."/>
            <person name="Rutherford K.M."/>
            <person name="Rutter S."/>
            <person name="Saunders D."/>
            <person name="Seeger K."/>
            <person name="Sharp S."/>
            <person name="Skelton J."/>
            <person name="Simmonds M.N."/>
            <person name="Squares R."/>
            <person name="Squares S."/>
            <person name="Stevens K."/>
            <person name="Taylor K."/>
            <person name="Taylor R.G."/>
            <person name="Tivey A."/>
            <person name="Walsh S.V."/>
            <person name="Warren T."/>
            <person name="Whitehead S."/>
            <person name="Woodward J.R."/>
            <person name="Volckaert G."/>
            <person name="Aert R."/>
            <person name="Robben J."/>
            <person name="Grymonprez B."/>
            <person name="Weltjens I."/>
            <person name="Vanstreels E."/>
            <person name="Rieger M."/>
            <person name="Schaefer M."/>
            <person name="Mueller-Auer S."/>
            <person name="Gabel C."/>
            <person name="Fuchs M."/>
            <person name="Duesterhoeft A."/>
            <person name="Fritzc C."/>
            <person name="Holzer E."/>
            <person name="Moestl D."/>
            <person name="Hilbert H."/>
            <person name="Borzym K."/>
            <person name="Langer I."/>
            <person name="Beck A."/>
            <person name="Lehrach H."/>
            <person name="Reinhardt R."/>
            <person name="Pohl T.M."/>
            <person name="Eger P."/>
            <person name="Zimmermann W."/>
            <person name="Wedler H."/>
            <person name="Wambutt R."/>
            <person name="Purnelle B."/>
            <person name="Goffeau A."/>
            <person name="Cadieu E."/>
            <person name="Dreano S."/>
            <person name="Gloux S."/>
            <person name="Lelaure V."/>
            <person name="Mottier S."/>
            <person name="Galibert F."/>
            <person name="Aves S.J."/>
            <person name="Xiang Z."/>
            <person name="Hunt C."/>
            <person name="Moore K."/>
            <person name="Hurst S.M."/>
            <person name="Lucas M."/>
            <person name="Rochet M."/>
            <person name="Gaillardin C."/>
            <person name="Tallada V.A."/>
            <person name="Garzon A."/>
            <person name="Thode G."/>
            <person name="Daga R.R."/>
            <person name="Cruzado L."/>
            <person name="Jimenez J."/>
            <person name="Sanchez M."/>
            <person name="del Rey F."/>
            <person name="Benito J."/>
            <person name="Dominguez A."/>
            <person name="Revuelta J.L."/>
            <person name="Moreno S."/>
            <person name="Armstrong J."/>
            <person name="Forsburg S.L."/>
            <person name="Cerutti L."/>
            <person name="Lowe T."/>
            <person name="McCombie W.R."/>
            <person name="Paulsen I."/>
            <person name="Potashkin J."/>
            <person name="Shpakovski G.V."/>
            <person name="Ussery D."/>
            <person name="Barrell B.G."/>
            <person name="Nurse P."/>
        </authorList>
    </citation>
    <scope>NUCLEOTIDE SEQUENCE [LARGE SCALE GENOMIC DNA]</scope>
    <source>
        <strain>972 / ATCC 24843</strain>
    </source>
</reference>
<reference key="2">
    <citation type="journal article" date="2011" name="Science">
        <title>Comparative functional genomics of the fission yeasts.</title>
        <authorList>
            <person name="Rhind N."/>
            <person name="Chen Z."/>
            <person name="Yassour M."/>
            <person name="Thompson D.A."/>
            <person name="Haas B.J."/>
            <person name="Habib N."/>
            <person name="Wapinski I."/>
            <person name="Roy S."/>
            <person name="Lin M.F."/>
            <person name="Heiman D.I."/>
            <person name="Young S.K."/>
            <person name="Furuya K."/>
            <person name="Guo Y."/>
            <person name="Pidoux A."/>
            <person name="Chen H.M."/>
            <person name="Robbertse B."/>
            <person name="Goldberg J.M."/>
            <person name="Aoki K."/>
            <person name="Bayne E.H."/>
            <person name="Berlin A.M."/>
            <person name="Desjardins C.A."/>
            <person name="Dobbs E."/>
            <person name="Dukaj L."/>
            <person name="Fan L."/>
            <person name="FitzGerald M.G."/>
            <person name="French C."/>
            <person name="Gujja S."/>
            <person name="Hansen K."/>
            <person name="Keifenheim D."/>
            <person name="Levin J.Z."/>
            <person name="Mosher R.A."/>
            <person name="Mueller C.A."/>
            <person name="Pfiffner J."/>
            <person name="Priest M."/>
            <person name="Russ C."/>
            <person name="Smialowska A."/>
            <person name="Swoboda P."/>
            <person name="Sykes S.M."/>
            <person name="Vaughn M."/>
            <person name="Vengrova S."/>
            <person name="Yoder R."/>
            <person name="Zeng Q."/>
            <person name="Allshire R."/>
            <person name="Baulcombe D."/>
            <person name="Birren B.W."/>
            <person name="Brown W."/>
            <person name="Ekwall K."/>
            <person name="Kellis M."/>
            <person name="Leatherwood J."/>
            <person name="Levin H."/>
            <person name="Margalit H."/>
            <person name="Martienssen R."/>
            <person name="Nieduszynski C.A."/>
            <person name="Spatafora J.W."/>
            <person name="Friedman N."/>
            <person name="Dalgaard J.Z."/>
            <person name="Baumann P."/>
            <person name="Niki H."/>
            <person name="Regev A."/>
            <person name="Nusbaum C."/>
        </authorList>
    </citation>
    <scope>REVISION OF GENE MODEL</scope>
</reference>
<reference key="3">
    <citation type="journal article" date="2004" name="J. Cell Sci.">
        <title>Sister-chromatid cohesion mediated by the alternative RF-CCtf18/Dcc1/Ctf8, the helicase Chl1 and the polymerase-alpha-associated protein Ctf4 is essential for chromatid disjunction during meiosis II.</title>
        <authorList>
            <person name="Petronczki M."/>
            <person name="Chwalla B."/>
            <person name="Siomos M.F."/>
            <person name="Yokobayashi S."/>
            <person name="Helmhart W."/>
            <person name="Deutschbauer A.M."/>
            <person name="Davis R.W."/>
            <person name="Watanabe Y."/>
            <person name="Nasmyth K."/>
        </authorList>
    </citation>
    <scope>FUNCTION</scope>
</reference>
<reference key="4">
    <citation type="journal article" date="2006" name="Nat. Biotechnol.">
        <title>ORFeome cloning and global analysis of protein localization in the fission yeast Schizosaccharomyces pombe.</title>
        <authorList>
            <person name="Matsuyama A."/>
            <person name="Arai R."/>
            <person name="Yashiroda Y."/>
            <person name="Shirai A."/>
            <person name="Kamata A."/>
            <person name="Sekido S."/>
            <person name="Kobayashi Y."/>
            <person name="Hashimoto A."/>
            <person name="Hamamoto M."/>
            <person name="Hiraoka Y."/>
            <person name="Horinouchi S."/>
            <person name="Yoshida M."/>
        </authorList>
    </citation>
    <scope>SUBCELLULAR LOCATION [LARGE SCALE ANALYSIS]</scope>
</reference>
<feature type="chain" id="PRO_0000116394" description="Sister chromatid cohesion protein dcc1">
    <location>
        <begin position="1"/>
        <end position="357"/>
    </location>
</feature>
<evidence type="ECO:0000269" key="1">
    <source>
    </source>
</evidence>
<evidence type="ECO:0000269" key="2">
    <source>
    </source>
</evidence>
<evidence type="ECO:0000305" key="3"/>